<accession>P04414</accession>
<evidence type="ECO:0000255" key="1">
    <source>
        <dbReference type="PROSITE-ProRule" id="PRU00842"/>
    </source>
</evidence>
<evidence type="ECO:0000255" key="2">
    <source>
        <dbReference type="PROSITE-ProRule" id="PRU00843"/>
    </source>
</evidence>
<evidence type="ECO:0000255" key="3">
    <source>
        <dbReference type="PROSITE-ProRule" id="PRU10029"/>
    </source>
</evidence>
<evidence type="ECO:0000269" key="4">
    <source>
    </source>
</evidence>
<evidence type="ECO:0007829" key="5">
    <source>
        <dbReference type="PDB" id="1VRP"/>
    </source>
</evidence>
<name>KCRM_TETCF</name>
<reference key="1">
    <citation type="journal article" date="1984" name="Proc. Natl. Acad. Sci. U.S.A.">
        <title>Creatine kinase protein sequence encoded by a cDNA made from Torpedo californica electric organ mRNA.</title>
        <authorList>
            <person name="West B.L."/>
            <person name="Babbitt P.C."/>
            <person name="Mendez B."/>
            <person name="Baxter J.D."/>
        </authorList>
    </citation>
    <scope>NUCLEOTIDE SEQUENCE [MRNA]</scope>
    <source>
        <tissue>Electric organ</tissue>
    </source>
</reference>
<reference key="2">
    <citation type="journal article" date="2002" name="Biochemistry">
        <title>The 2.1 A structure of Torpedo californica creatine kinase complexed with the ADP-Mg(2+)-NO(3)(-)-creatine transition-state analogue complex.</title>
        <authorList>
            <person name="Lahiri S.D."/>
            <person name="Wang P.-F."/>
            <person name="Babbitt P.C."/>
            <person name="McLeish M.J."/>
            <person name="Kenyon G.L."/>
            <person name="Allen K.N."/>
        </authorList>
    </citation>
    <scope>X-RAY CRYSTALLOGRAPHY (2.1 ANGSTROMS) IN COMPLEX WITH ATP ANALOG</scope>
    <scope>SUBUNIT</scope>
</reference>
<sequence>MPFGNTHNKWKLNYSAAEEFPDLSKHNNHMAKALTLDIYKKLRDKETPSGFTLDDIIQTGVDNPGHPFIMTVGCVAGDEECYEVFKDLFDPVIEDRHGGYKPTDKHKTDLNQENLKGGDDLDPNYVLSSRVRTGRSIKGIALPPHCSRGERRLVEKLCIDGLATLTGEFQGKYYPLSSMSDAEQQQLIDDHFLFDKPISPLLLASGMARDWPDGRGIWHNNDKTFLVWVNEEDHLRVISMQKGGNMKEVFRRFCVGLKKIEDIFVKAGRGFMWNEHLGYVLTCPSNLGTGLRGGVHVKIPHLCKHEKFSEVLKRTRLQKRGTGGVDTAAVGSIYDISNADRLGFSEVEQVQMVVDGVKLMVEMEKRLENGKSIDDLMPAQK</sequence>
<comment type="function">
    <text>Reversibly catalyzes the transfer of phosphate between ATP and various phosphogens (e.g. creatine phosphate). Creatine kinase isoenzymes play a central role in energy transduction in tissues with large, fluctuating energy demands, such as skeletal muscle, heart, brain and spermatozoa.</text>
</comment>
<comment type="catalytic activity">
    <reaction evidence="3">
        <text>creatine + ATP = N-phosphocreatine + ADP + H(+)</text>
        <dbReference type="Rhea" id="RHEA:17157"/>
        <dbReference type="ChEBI" id="CHEBI:15378"/>
        <dbReference type="ChEBI" id="CHEBI:30616"/>
        <dbReference type="ChEBI" id="CHEBI:57947"/>
        <dbReference type="ChEBI" id="CHEBI:58092"/>
        <dbReference type="ChEBI" id="CHEBI:456216"/>
        <dbReference type="EC" id="2.7.3.2"/>
    </reaction>
</comment>
<comment type="subunit">
    <text evidence="4">Dimer of identical or non-identical chains. With MM being the major form in skeletal muscle and myocardium, MB existing in myocardium, and BB existing in many tissues, especially brain.</text>
</comment>
<comment type="subcellular location">
    <subcellularLocation>
        <location>Cytoplasm</location>
    </subcellularLocation>
</comment>
<comment type="miscellaneous">
    <text>This electric ray muscle-specific creatine kinase (MM isozyme) is isolated from the electric organ, which derives embryologically from skeletal muscle. It may be involved in the electrical discharge process.</text>
</comment>
<comment type="similarity">
    <text evidence="1 2">Belongs to the ATP:guanido phosphotransferase family.</text>
</comment>
<dbReference type="EC" id="2.7.3.2"/>
<dbReference type="EMBL" id="M36427">
    <property type="protein sequence ID" value="AAA49278.1"/>
    <property type="molecule type" value="mRNA"/>
</dbReference>
<dbReference type="PIR" id="A00677">
    <property type="entry name" value="KIRYCT"/>
</dbReference>
<dbReference type="PDB" id="1VRP">
    <property type="method" value="X-ray"/>
    <property type="resolution" value="2.10 A"/>
    <property type="chains" value="A/B=1-381"/>
</dbReference>
<dbReference type="PDBsum" id="1VRP"/>
<dbReference type="SMR" id="P04414"/>
<dbReference type="EvolutionaryTrace" id="P04414"/>
<dbReference type="GO" id="GO:0005737">
    <property type="term" value="C:cytoplasm"/>
    <property type="evidence" value="ECO:0007669"/>
    <property type="project" value="UniProtKB-SubCell"/>
</dbReference>
<dbReference type="GO" id="GO:0005615">
    <property type="term" value="C:extracellular space"/>
    <property type="evidence" value="ECO:0007669"/>
    <property type="project" value="TreeGrafter"/>
</dbReference>
<dbReference type="GO" id="GO:0005524">
    <property type="term" value="F:ATP binding"/>
    <property type="evidence" value="ECO:0007669"/>
    <property type="project" value="UniProtKB-KW"/>
</dbReference>
<dbReference type="GO" id="GO:0004111">
    <property type="term" value="F:creatine kinase activity"/>
    <property type="evidence" value="ECO:0007669"/>
    <property type="project" value="UniProtKB-EC"/>
</dbReference>
<dbReference type="GO" id="GO:0046314">
    <property type="term" value="P:phosphocreatine biosynthetic process"/>
    <property type="evidence" value="ECO:0007669"/>
    <property type="project" value="InterPro"/>
</dbReference>
<dbReference type="CDD" id="cd00716">
    <property type="entry name" value="creatine_kinase_like"/>
    <property type="match status" value="1"/>
</dbReference>
<dbReference type="FunFam" id="3.30.590.10:FF:000026">
    <property type="entry name" value="Creatine kinase B-type"/>
    <property type="match status" value="1"/>
</dbReference>
<dbReference type="FunFam" id="1.10.135.10:FF:000001">
    <property type="entry name" value="Creatine kinase M-type"/>
    <property type="match status" value="1"/>
</dbReference>
<dbReference type="Gene3D" id="1.10.135.10">
    <property type="entry name" value="ATP:guanido phosphotransferase, N-terminal domain"/>
    <property type="match status" value="1"/>
</dbReference>
<dbReference type="Gene3D" id="3.30.590.10">
    <property type="entry name" value="Glutamine synthetase/guanido kinase, catalytic domain"/>
    <property type="match status" value="1"/>
</dbReference>
<dbReference type="InterPro" id="IPR000749">
    <property type="entry name" value="ATP-guanido_PTrfase"/>
</dbReference>
<dbReference type="InterPro" id="IPR022415">
    <property type="entry name" value="ATP-guanido_PTrfase_AS"/>
</dbReference>
<dbReference type="InterPro" id="IPR022414">
    <property type="entry name" value="ATP-guanido_PTrfase_cat"/>
</dbReference>
<dbReference type="InterPro" id="IPR022413">
    <property type="entry name" value="ATP-guanido_PTrfase_N"/>
</dbReference>
<dbReference type="InterPro" id="IPR036802">
    <property type="entry name" value="ATP-guanido_PTrfase_N_sf"/>
</dbReference>
<dbReference type="InterPro" id="IPR014746">
    <property type="entry name" value="Gln_synth/guanido_kin_cat_dom"/>
</dbReference>
<dbReference type="PANTHER" id="PTHR11547">
    <property type="entry name" value="ARGININE OR CREATINE KINASE"/>
    <property type="match status" value="1"/>
</dbReference>
<dbReference type="PANTHER" id="PTHR11547:SF63">
    <property type="entry name" value="CREATINE KINASE M-TYPE"/>
    <property type="match status" value="1"/>
</dbReference>
<dbReference type="Pfam" id="PF00217">
    <property type="entry name" value="ATP-gua_Ptrans"/>
    <property type="match status" value="1"/>
</dbReference>
<dbReference type="Pfam" id="PF02807">
    <property type="entry name" value="ATP-gua_PtransN"/>
    <property type="match status" value="1"/>
</dbReference>
<dbReference type="SUPFAM" id="SSF55931">
    <property type="entry name" value="Glutamine synthetase/guanido kinase"/>
    <property type="match status" value="1"/>
</dbReference>
<dbReference type="SUPFAM" id="SSF48034">
    <property type="entry name" value="Guanido kinase N-terminal domain"/>
    <property type="match status" value="1"/>
</dbReference>
<dbReference type="PROSITE" id="PS00112">
    <property type="entry name" value="PHOSPHAGEN_KINASE"/>
    <property type="match status" value="1"/>
</dbReference>
<dbReference type="PROSITE" id="PS51510">
    <property type="entry name" value="PHOSPHAGEN_KINASE_C"/>
    <property type="match status" value="1"/>
</dbReference>
<dbReference type="PROSITE" id="PS51509">
    <property type="entry name" value="PHOSPHAGEN_KINASE_N"/>
    <property type="match status" value="1"/>
</dbReference>
<feature type="chain" id="PRO_0000211981" description="Creatine kinase M-type">
    <location>
        <begin position="1"/>
        <end position="381"/>
    </location>
</feature>
<feature type="domain" description="Phosphagen kinase N-terminal" evidence="1">
    <location>
        <begin position="11"/>
        <end position="98"/>
    </location>
</feature>
<feature type="domain" description="Phosphagen kinase C-terminal" evidence="2">
    <location>
        <begin position="125"/>
        <end position="367"/>
    </location>
</feature>
<feature type="binding site">
    <location>
        <begin position="128"/>
        <end position="132"/>
    </location>
    <ligand>
        <name>ATP</name>
        <dbReference type="ChEBI" id="CHEBI:30616"/>
    </ligand>
</feature>
<feature type="binding site" evidence="2">
    <location>
        <position position="191"/>
    </location>
    <ligand>
        <name>ATP</name>
        <dbReference type="ChEBI" id="CHEBI:30616"/>
    </ligand>
</feature>
<feature type="binding site" evidence="2">
    <location>
        <position position="236"/>
    </location>
    <ligand>
        <name>ATP</name>
        <dbReference type="ChEBI" id="CHEBI:30616"/>
    </ligand>
</feature>
<feature type="binding site">
    <location>
        <position position="292"/>
    </location>
    <ligand>
        <name>ATP</name>
        <dbReference type="ChEBI" id="CHEBI:30616"/>
    </ligand>
</feature>
<feature type="binding site">
    <location>
        <begin position="320"/>
        <end position="325"/>
    </location>
    <ligand>
        <name>ATP</name>
        <dbReference type="ChEBI" id="CHEBI:30616"/>
    </ligand>
</feature>
<feature type="binding site">
    <location>
        <position position="335"/>
    </location>
    <ligand>
        <name>ATP</name>
        <dbReference type="ChEBI" id="CHEBI:30616"/>
    </ligand>
</feature>
<feature type="helix" evidence="5">
    <location>
        <begin position="16"/>
        <end position="19"/>
    </location>
</feature>
<feature type="helix" evidence="5">
    <location>
        <begin position="29"/>
        <end position="33"/>
    </location>
</feature>
<feature type="helix" evidence="5">
    <location>
        <begin position="36"/>
        <end position="42"/>
    </location>
</feature>
<feature type="helix" evidence="5">
    <location>
        <begin position="53"/>
        <end position="62"/>
    </location>
</feature>
<feature type="strand" evidence="5">
    <location>
        <begin position="67"/>
        <end position="69"/>
    </location>
</feature>
<feature type="helix" evidence="5">
    <location>
        <begin position="81"/>
        <end position="84"/>
    </location>
</feature>
<feature type="helix" evidence="5">
    <location>
        <begin position="86"/>
        <end position="96"/>
    </location>
</feature>
<feature type="helix" evidence="5">
    <location>
        <begin position="112"/>
        <end position="114"/>
    </location>
</feature>
<feature type="turn" evidence="5">
    <location>
        <begin position="123"/>
        <end position="125"/>
    </location>
</feature>
<feature type="strand" evidence="5">
    <location>
        <begin position="126"/>
        <end position="135"/>
    </location>
</feature>
<feature type="turn" evidence="5">
    <location>
        <begin position="143"/>
        <end position="145"/>
    </location>
</feature>
<feature type="helix" evidence="5">
    <location>
        <begin position="148"/>
        <end position="162"/>
    </location>
</feature>
<feature type="helix" evidence="5">
    <location>
        <begin position="167"/>
        <end position="169"/>
    </location>
</feature>
<feature type="strand" evidence="5">
    <location>
        <begin position="171"/>
        <end position="175"/>
    </location>
</feature>
<feature type="helix" evidence="5">
    <location>
        <begin position="176"/>
        <end position="178"/>
    </location>
</feature>
<feature type="helix" evidence="5">
    <location>
        <begin position="181"/>
        <end position="189"/>
    </location>
</feature>
<feature type="helix" evidence="5">
    <location>
        <begin position="200"/>
        <end position="203"/>
    </location>
</feature>
<feature type="turn" evidence="5">
    <location>
        <begin position="204"/>
        <end position="214"/>
    </location>
</feature>
<feature type="strand" evidence="5">
    <location>
        <begin position="216"/>
        <end position="220"/>
    </location>
</feature>
<feature type="strand" evidence="5">
    <location>
        <begin position="223"/>
        <end position="244"/>
    </location>
</feature>
<feature type="helix" evidence="5">
    <location>
        <begin position="246"/>
        <end position="266"/>
    </location>
</feature>
<feature type="turn" evidence="5">
    <location>
        <begin position="275"/>
        <end position="277"/>
    </location>
</feature>
<feature type="helix" evidence="5">
    <location>
        <begin position="284"/>
        <end position="286"/>
    </location>
</feature>
<feature type="strand" evidence="5">
    <location>
        <begin position="292"/>
        <end position="298"/>
    </location>
</feature>
<feature type="helix" evidence="5">
    <location>
        <begin position="302"/>
        <end position="304"/>
    </location>
</feature>
<feature type="helix" evidence="5">
    <location>
        <begin position="308"/>
        <end position="315"/>
    </location>
</feature>
<feature type="strand" evidence="5">
    <location>
        <begin position="317"/>
        <end position="321"/>
    </location>
</feature>
<feature type="strand" evidence="5">
    <location>
        <begin position="324"/>
        <end position="329"/>
    </location>
</feature>
<feature type="strand" evidence="5">
    <location>
        <begin position="333"/>
        <end position="338"/>
    </location>
</feature>
<feature type="strand" evidence="5">
    <location>
        <begin position="342"/>
        <end position="344"/>
    </location>
</feature>
<feature type="helix" evidence="5">
    <location>
        <begin position="346"/>
        <end position="368"/>
    </location>
</feature>
<feature type="helix" evidence="5">
    <location>
        <begin position="374"/>
        <end position="376"/>
    </location>
</feature>
<organism>
    <name type="scientific">Tetronarce californica</name>
    <name type="common">Pacific electric ray</name>
    <name type="synonym">Torpedo californica</name>
    <dbReference type="NCBI Taxonomy" id="7787"/>
    <lineage>
        <taxon>Eukaryota</taxon>
        <taxon>Metazoa</taxon>
        <taxon>Chordata</taxon>
        <taxon>Craniata</taxon>
        <taxon>Vertebrata</taxon>
        <taxon>Chondrichthyes</taxon>
        <taxon>Elasmobranchii</taxon>
        <taxon>Batoidea</taxon>
        <taxon>Torpediniformes</taxon>
        <taxon>Torpedinidae</taxon>
        <taxon>Tetronarce</taxon>
    </lineage>
</organism>
<proteinExistence type="evidence at protein level"/>
<protein>
    <recommendedName>
        <fullName>Creatine kinase M-type</fullName>
        <ecNumber>2.7.3.2</ecNumber>
    </recommendedName>
    <alternativeName>
        <fullName>Creatine kinase M chain</fullName>
    </alternativeName>
    <alternativeName>
        <fullName>M-CK</fullName>
    </alternativeName>
</protein>
<keyword id="KW-0002">3D-structure</keyword>
<keyword id="KW-0067">ATP-binding</keyword>
<keyword id="KW-0963">Cytoplasm</keyword>
<keyword id="KW-0418">Kinase</keyword>
<keyword id="KW-0547">Nucleotide-binding</keyword>
<keyword id="KW-0808">Transferase</keyword>